<keyword id="KW-0903">Direct protein sequencing</keyword>
<keyword id="KW-1015">Disulfide bond</keyword>
<keyword id="KW-0960">Knottin</keyword>
<keyword id="KW-0611">Plant defense</keyword>
<keyword id="KW-0732">Signal</keyword>
<proteinExistence type="evidence at protein level"/>
<reference key="1">
    <citation type="journal article" date="2004" name="J. Biol. Chem.">
        <title>Conserved structural and sequence elements implicated in the processing of gene-encoded circular proteins.</title>
        <authorList>
            <person name="Dutton J.L."/>
            <person name="Renda R.F."/>
            <person name="Waine C."/>
            <person name="Clark R.J."/>
            <person name="Daly N.L."/>
            <person name="Jennings C.V."/>
            <person name="Anderson M.A."/>
            <person name="Craik D.J."/>
        </authorList>
    </citation>
    <scope>NUCLEOTIDE SEQUENCE [MRNA]</scope>
    <source>
        <tissue>Leaf</tissue>
    </source>
</reference>
<reference key="2">
    <citation type="journal article" date="1999" name="J. Mol. Biol.">
        <title>Plant cyclotides: a unique family of cyclic and knotted proteins that defines the cyclic cystine knot structural motif.</title>
        <authorList>
            <person name="Craik D.J."/>
            <person name="Daly N.L."/>
            <person name="Bond T."/>
            <person name="Waine C."/>
        </authorList>
    </citation>
    <scope>PROTEIN SEQUENCE OF 85-115</scope>
</reference>
<reference key="3">
    <citation type="journal article" date="2006" name="Biochem. J.">
        <title>A novel suite of cyclotides from Viola odorata: sequence variation and the implications for structure, function and stability.</title>
        <authorList>
            <person name="Ireland D.C."/>
            <person name="Colgrave M.L."/>
            <person name="Craik D.J."/>
        </authorList>
    </citation>
    <scope>PROTEIN SEQUENCE OF 85-115</scope>
    <scope>MASS SPECTROMETRY</scope>
</reference>
<reference key="4">
    <citation type="journal article" date="2017" name="J. Nat. Prod.">
        <title>Cyclotides from the Indian Medicinal Plant Viola odorata (Banafsha): Identification and Characterization.</title>
        <authorList>
            <person name="Narayani M."/>
            <person name="Chadha A."/>
            <person name="Srivastava S."/>
        </authorList>
    </citation>
    <scope>TISSUE SPECIFICITY</scope>
    <scope>IDENTIFICATION BY MASS SPECTROMETRY</scope>
</reference>
<protein>
    <recommendedName>
        <fullName>Cycloviolacin-O11</fullName>
    </recommendedName>
    <alternativeName>
        <fullName>Cyclotide c2</fullName>
    </alternativeName>
</protein>
<gene>
    <name type="primary">Voc2</name>
</gene>
<comment type="function">
    <text>Probably participates in a plant defense mechanism.</text>
</comment>
<comment type="tissue specificity">
    <text evidence="4">Expressed in leaves, petals and petioles but not in roots and runners (at protein level).</text>
</comment>
<comment type="domain">
    <text>The presence of a 'disulfide through disulfide knot' structurally defines this protein as a knottin.</text>
</comment>
<comment type="PTM">
    <text>Cycloviolacin-O11 is a cyclic peptide.</text>
</comment>
<comment type="mass spectrometry"/>
<comment type="similarity">
    <text evidence="2">Belongs to the cyclotide family. Bracelet subfamily.</text>
</comment>
<feature type="signal peptide" evidence="1">
    <location>
        <begin position="1"/>
        <end position="22"/>
    </location>
</feature>
<feature type="propeptide" id="PRO_0000294938">
    <location>
        <begin position="23"/>
        <end position="84"/>
    </location>
</feature>
<feature type="peptide" id="PRO_0000044704" description="Cycloviolacin-O11">
    <location>
        <begin position="85"/>
        <end position="115"/>
    </location>
</feature>
<feature type="propeptide" id="PRO_0000294939">
    <location>
        <begin position="116"/>
        <end position="118"/>
    </location>
</feature>
<feature type="disulfide bond">
    <location>
        <begin position="89"/>
        <end position="105"/>
    </location>
</feature>
<feature type="disulfide bond">
    <location>
        <begin position="93"/>
        <end position="107"/>
    </location>
</feature>
<feature type="disulfide bond">
    <location>
        <begin position="98"/>
        <end position="112"/>
    </location>
</feature>
<feature type="cross-link" description="Cyclopeptide (Gly-Asn)">
    <location>
        <begin position="85"/>
        <end position="115"/>
    </location>
</feature>
<evidence type="ECO:0000255" key="1"/>
<evidence type="ECO:0000255" key="2">
    <source>
        <dbReference type="PROSITE-ProRule" id="PRU00395"/>
    </source>
</evidence>
<evidence type="ECO:0000269" key="3">
    <source>
    </source>
</evidence>
<evidence type="ECO:0000269" key="4">
    <source>
    </source>
</evidence>
<organism>
    <name type="scientific">Viola odorata</name>
    <name type="common">Sweet violet</name>
    <dbReference type="NCBI Taxonomy" id="97441"/>
    <lineage>
        <taxon>Eukaryota</taxon>
        <taxon>Viridiplantae</taxon>
        <taxon>Streptophyta</taxon>
        <taxon>Embryophyta</taxon>
        <taxon>Tracheophyta</taxon>
        <taxon>Spermatophyta</taxon>
        <taxon>Magnoliopsida</taxon>
        <taxon>eudicotyledons</taxon>
        <taxon>Gunneridae</taxon>
        <taxon>Pentapetalae</taxon>
        <taxon>rosids</taxon>
        <taxon>fabids</taxon>
        <taxon>Malpighiales</taxon>
        <taxon>Violaceae</taxon>
        <taxon>Viola</taxon>
        <taxon>Viola subgen. Viola</taxon>
        <taxon>Viola sect. Viola</taxon>
        <taxon>Viola subsect. Viola</taxon>
    </lineage>
</organism>
<name>CYO11_VIOOD</name>
<accession>P58443</accession>
<accession>Q5USP0</accession>
<sequence>MEMKNMVVGLFLIAAFALPALATSFEKDFITHETVQAILKKVGPSSNGMLDEQAISALTGKTIISNPVLEEALLTHSNSINALGGTLPCGESCVWIPCISAVVGCSCKSKVCYKNSLA</sequence>
<dbReference type="EMBL" id="AY630563">
    <property type="protein sequence ID" value="AAU04392.1"/>
    <property type="molecule type" value="mRNA"/>
</dbReference>
<dbReference type="SMR" id="P58443"/>
<dbReference type="GO" id="GO:0006952">
    <property type="term" value="P:defense response"/>
    <property type="evidence" value="ECO:0000250"/>
    <property type="project" value="UniProtKB"/>
</dbReference>
<dbReference type="InterPro" id="IPR005535">
    <property type="entry name" value="Cyclotide"/>
</dbReference>
<dbReference type="InterPro" id="IPR012323">
    <property type="entry name" value="Cyclotide_bracelet_CS"/>
</dbReference>
<dbReference type="InterPro" id="IPR036146">
    <property type="entry name" value="Cyclotide_sf"/>
</dbReference>
<dbReference type="Pfam" id="PF03784">
    <property type="entry name" value="Cyclotide"/>
    <property type="match status" value="1"/>
</dbReference>
<dbReference type="SUPFAM" id="SSF57038">
    <property type="entry name" value="Cyclotides"/>
    <property type="match status" value="1"/>
</dbReference>
<dbReference type="PROSITE" id="PS51052">
    <property type="entry name" value="CYCLOTIDE"/>
    <property type="match status" value="1"/>
</dbReference>
<dbReference type="PROSITE" id="PS60008">
    <property type="entry name" value="CYCLOTIDE_BRACELET"/>
    <property type="match status" value="1"/>
</dbReference>